<sequence>MDSQVLPLILLIIVFAASSAHGHFPHRTNQDSDCPEASNGCWCHDSFAQCWKTYEVANIARKKDVIRKLELLSLQLEDVLKYIAQLPNLEAIKLGPEGDDHLFECSCDNVLELSGSVVSVVNANDVHVTGCLEHGWSRDIYTMNAFATRCRRRLILESGGAEMRHRRSAKDDDVNKRASPRKGSSPAGKKVQIMEQDAGKGDAHNEKEVVKDQKPTKELFDFFMGHRRKRRSIDDVIGEMRAERQRRYAQGAGGMQGGYGYPQAGGAQYGGQPVQGYMNQGPPMGQRPAAAGPAGGFGAPQGQPPVGQPIGEAAGGGEFLGEPGVGGESEFAEYSSSIGEGETINAEVMEKIKAVLGATKIDLPVDINDPYDLGLLLRHLRHHSNLLANIGDPEVRNQVLTAMQEEEEEEEQDAANGVRDNVLNNLNEGPGAGAVAGAAMAAGMPPYPGGAQGGMRVGGQPQNPMGGNAYNPMTGYRQQG</sequence>
<evidence type="ECO:0000255" key="1"/>
<evidence type="ECO:0000256" key="2">
    <source>
        <dbReference type="SAM" id="MobiDB-lite"/>
    </source>
</evidence>
<evidence type="ECO:0000305" key="3"/>
<dbReference type="EMBL" id="X54155">
    <property type="protein sequence ID" value="CAA38094.1"/>
    <property type="molecule type" value="mRNA"/>
</dbReference>
<dbReference type="PIR" id="S14394">
    <property type="entry name" value="S14394"/>
</dbReference>
<dbReference type="SMR" id="P24608"/>
<dbReference type="GO" id="GO:0002080">
    <property type="term" value="C:acrosomal membrane"/>
    <property type="evidence" value="ECO:0007669"/>
    <property type="project" value="UniProtKB-SubCell"/>
</dbReference>
<dbReference type="GO" id="GO:0007155">
    <property type="term" value="P:cell adhesion"/>
    <property type="evidence" value="ECO:0007669"/>
    <property type="project" value="UniProtKB-KW"/>
</dbReference>
<dbReference type="GO" id="GO:0007342">
    <property type="term" value="P:fusion of sperm to egg plasma membrane involved in single fertilization"/>
    <property type="evidence" value="ECO:0007669"/>
    <property type="project" value="InterPro"/>
</dbReference>
<dbReference type="InterPro" id="IPR000775">
    <property type="entry name" value="Bindin"/>
</dbReference>
<dbReference type="Pfam" id="PF02084">
    <property type="entry name" value="Bindin"/>
    <property type="match status" value="1"/>
</dbReference>
<dbReference type="PRINTS" id="PR00761">
    <property type="entry name" value="BINDIN"/>
</dbReference>
<accession>P24608</accession>
<organism>
    <name type="scientific">Arbacia punctulata</name>
    <name type="common">Punctuate sea urchin</name>
    <dbReference type="NCBI Taxonomy" id="7641"/>
    <lineage>
        <taxon>Eukaryota</taxon>
        <taxon>Metazoa</taxon>
        <taxon>Echinodermata</taxon>
        <taxon>Eleutherozoa</taxon>
        <taxon>Echinozoa</taxon>
        <taxon>Echinoidea</taxon>
        <taxon>Euechinoidea</taxon>
        <taxon>Echinacea</taxon>
        <taxon>Arbacioida</taxon>
        <taxon>Arbaciidae</taxon>
        <taxon>Arbacia</taxon>
    </lineage>
</organism>
<feature type="signal peptide" evidence="1">
    <location>
        <begin position="1"/>
        <end position="20"/>
    </location>
</feature>
<feature type="propeptide" id="PRO_0000020809" evidence="1">
    <location>
        <begin position="21"/>
        <end position="247"/>
    </location>
</feature>
<feature type="chain" id="PRO_0000020810" description="Bindin">
    <location>
        <begin position="248"/>
        <end position="480"/>
    </location>
</feature>
<feature type="transmembrane region" description="Helical" evidence="1">
    <location>
        <begin position="431"/>
        <end position="451"/>
    </location>
</feature>
<feature type="region of interest" description="Disordered" evidence="2">
    <location>
        <begin position="161"/>
        <end position="211"/>
    </location>
</feature>
<feature type="region of interest" description="Fucose-binding domain" evidence="1">
    <location>
        <begin position="377"/>
        <end position="385"/>
    </location>
</feature>
<feature type="region of interest" description="Disordered" evidence="2">
    <location>
        <begin position="452"/>
        <end position="480"/>
    </location>
</feature>
<feature type="compositionally biased region" description="Basic and acidic residues" evidence="2">
    <location>
        <begin position="197"/>
        <end position="211"/>
    </location>
</feature>
<protein>
    <recommendedName>
        <fullName>Bindin</fullName>
    </recommendedName>
</protein>
<proteinExistence type="evidence at transcript level"/>
<name>BIND_ARBPU</name>
<comment type="function">
    <text>Species-specific sea urchin sperm protein required for adhesion of sperm to the egg surface during fertilization. Bindin coats the acrosomal process after it is externalized by the acrosome reaction. It binds to sulfated, fucose-containing polysaccharides on the vitelline layer receptor proteoglycans which cover the egg plasma membrane.</text>
</comment>
<comment type="subcellular location">
    <subcellularLocation>
        <location evidence="3">Cytoplasmic vesicle</location>
        <location evidence="3">Secretory vesicle</location>
        <location evidence="3">Acrosome membrane</location>
        <topology evidence="3">Single-pass membrane protein</topology>
    </subcellularLocation>
</comment>
<comment type="miscellaneous">
    <text>A.punctulata bindin forms multilamellar structures reminiscent of lipid bilayers.</text>
</comment>
<comment type="similarity">
    <text evidence="3">Belongs to the bindin family.</text>
</comment>
<reference key="1">
    <citation type="journal article" date="1991" name="Dev. Biol.">
        <title>The sequence of the Arbacia punctulata bindin cDNA and implications for the structural basis of species-specific sperm adhesion and fertilization.</title>
        <authorList>
            <person name="Glabe C.G."/>
            <person name="Clark D."/>
        </authorList>
    </citation>
    <scope>NUCLEOTIDE SEQUENCE [MRNA]</scope>
    <source>
        <tissue>Testis</tissue>
    </source>
</reference>
<keyword id="KW-0130">Cell adhesion</keyword>
<keyword id="KW-0165">Cleavage on pair of basic residues</keyword>
<keyword id="KW-0968">Cytoplasmic vesicle</keyword>
<keyword id="KW-0278">Fertilization</keyword>
<keyword id="KW-0472">Membrane</keyword>
<keyword id="KW-0732">Signal</keyword>
<keyword id="KW-0812">Transmembrane</keyword>
<keyword id="KW-1133">Transmembrane helix</keyword>